<sequence>MDLENLAEETRIVLADLIKRSDIKKGQIFVLGLSSSEVAGGVIGKNSNLDIGEVIVKTILTYLNDRGIYLAVQGCEHLNRALVVERELADKRNLEIVNVLPNLHAGGSGQLAAFKYMKDPVEVEEIVADAGLDIGDTAIGMHVKRVQVPLRPLLRELEGAHLTALASRPKLIGGSRASYQPDPIRKF</sequence>
<reference key="1">
    <citation type="journal article" date="2002" name="Proc. Natl. Acad. Sci. U.S.A.">
        <title>Genome sequence of Streptococcus mutans UA159, a cariogenic dental pathogen.</title>
        <authorList>
            <person name="Ajdic D.J."/>
            <person name="McShan W.M."/>
            <person name="McLaughlin R.E."/>
            <person name="Savic G."/>
            <person name="Chang J."/>
            <person name="Carson M.B."/>
            <person name="Primeaux C."/>
            <person name="Tian R."/>
            <person name="Kenton S."/>
            <person name="Jia H.G."/>
            <person name="Lin S.P."/>
            <person name="Qian Y."/>
            <person name="Li S."/>
            <person name="Zhu H."/>
            <person name="Najar F.Z."/>
            <person name="Lai H."/>
            <person name="White J."/>
            <person name="Roe B.A."/>
            <person name="Ferretti J.J."/>
        </authorList>
    </citation>
    <scope>NUCLEOTIDE SEQUENCE [LARGE SCALE GENOMIC DNA]</scope>
    <source>
        <strain>ATCC 700610 / UA159</strain>
    </source>
</reference>
<proteinExistence type="inferred from homology"/>
<dbReference type="EMBL" id="AE014133">
    <property type="protein sequence ID" value="AAN57872.1"/>
    <property type="molecule type" value="Genomic_DNA"/>
</dbReference>
<dbReference type="RefSeq" id="NP_720566.1">
    <property type="nucleotide sequence ID" value="NC_004350.2"/>
</dbReference>
<dbReference type="RefSeq" id="WP_002263422.1">
    <property type="nucleotide sequence ID" value="NC_004350.2"/>
</dbReference>
<dbReference type="SMR" id="Q8DWG8"/>
<dbReference type="STRING" id="210007.SMU_87"/>
<dbReference type="KEGG" id="smu:SMU_87"/>
<dbReference type="PATRIC" id="fig|210007.7.peg.76"/>
<dbReference type="eggNOG" id="COG4475">
    <property type="taxonomic scope" value="Bacteria"/>
</dbReference>
<dbReference type="HOGENOM" id="CLU_106658_0_0_9"/>
<dbReference type="OrthoDB" id="9803187at2"/>
<dbReference type="PhylomeDB" id="Q8DWG8"/>
<dbReference type="Proteomes" id="UP000002512">
    <property type="component" value="Chromosome"/>
</dbReference>
<dbReference type="Gene3D" id="3.40.50.10360">
    <property type="entry name" value="Hypothetical protein TT1679"/>
    <property type="match status" value="1"/>
</dbReference>
<dbReference type="HAMAP" id="MF_00800">
    <property type="entry name" value="UPF0340"/>
    <property type="match status" value="1"/>
</dbReference>
<dbReference type="InterPro" id="IPR028345">
    <property type="entry name" value="Antibiotic_NAT-like"/>
</dbReference>
<dbReference type="InterPro" id="IPR006340">
    <property type="entry name" value="DUF436"/>
</dbReference>
<dbReference type="NCBIfam" id="TIGR01440">
    <property type="entry name" value="TIGR01440 family protein"/>
    <property type="match status" value="1"/>
</dbReference>
<dbReference type="Pfam" id="PF04260">
    <property type="entry name" value="DUF436"/>
    <property type="match status" value="1"/>
</dbReference>
<dbReference type="PIRSF" id="PIRSF007510">
    <property type="entry name" value="UCP007510"/>
    <property type="match status" value="1"/>
</dbReference>
<dbReference type="SUPFAM" id="SSF110710">
    <property type="entry name" value="TTHA0583/YokD-like"/>
    <property type="match status" value="1"/>
</dbReference>
<organism>
    <name type="scientific">Streptococcus mutans serotype c (strain ATCC 700610 / UA159)</name>
    <dbReference type="NCBI Taxonomy" id="210007"/>
    <lineage>
        <taxon>Bacteria</taxon>
        <taxon>Bacillati</taxon>
        <taxon>Bacillota</taxon>
        <taxon>Bacilli</taxon>
        <taxon>Lactobacillales</taxon>
        <taxon>Streptococcaceae</taxon>
        <taxon>Streptococcus</taxon>
    </lineage>
</organism>
<name>Y087_STRMU</name>
<evidence type="ECO:0000255" key="1">
    <source>
        <dbReference type="HAMAP-Rule" id="MF_00800"/>
    </source>
</evidence>
<protein>
    <recommendedName>
        <fullName evidence="1">UPF0340 protein SMU_87</fullName>
    </recommendedName>
</protein>
<comment type="similarity">
    <text evidence="1">Belongs to the UPF0340 family.</text>
</comment>
<feature type="chain" id="PRO_0000213020" description="UPF0340 protein SMU_87">
    <location>
        <begin position="1"/>
        <end position="187"/>
    </location>
</feature>
<keyword id="KW-1185">Reference proteome</keyword>
<gene>
    <name type="ordered locus">SMU_87</name>
</gene>
<accession>Q8DWG8</accession>